<name>PSBN_CYCTA</name>
<organism>
    <name type="scientific">Cycas taitungensis</name>
    <name type="common">Prince sago</name>
    <name type="synonym">Cycas taiwaniana</name>
    <dbReference type="NCBI Taxonomy" id="54799"/>
    <lineage>
        <taxon>Eukaryota</taxon>
        <taxon>Viridiplantae</taxon>
        <taxon>Streptophyta</taxon>
        <taxon>Embryophyta</taxon>
        <taxon>Tracheophyta</taxon>
        <taxon>Spermatophyta</taxon>
        <taxon>Cycadidae</taxon>
        <taxon>Cycadales</taxon>
        <taxon>Cycadaceae</taxon>
        <taxon>Cycas</taxon>
    </lineage>
</organism>
<reference key="1">
    <citation type="journal article" date="2007" name="Mol. Biol. Evol.">
        <title>Chloroplast genome (cpDNA) of Cycas taitungensis and 56 cp protein-coding genes of Gnetum parvifolium: insights into cpDNA evolution and phylogeny of extant seed plants.</title>
        <authorList>
            <person name="Wu C.-S."/>
            <person name="Wang Y.-N."/>
            <person name="Liu S.-M."/>
            <person name="Chaw S.-M."/>
        </authorList>
    </citation>
    <scope>NUCLEOTIDE SEQUENCE [LARGE SCALE GENOMIC DNA]</scope>
</reference>
<geneLocation type="chloroplast"/>
<comment type="function">
    <text evidence="1">May play a role in photosystem I and II biogenesis.</text>
</comment>
<comment type="subcellular location">
    <subcellularLocation>
        <location evidence="1">Plastid</location>
        <location evidence="1">Chloroplast thylakoid membrane</location>
        <topology evidence="1">Single-pass membrane protein</topology>
    </subcellularLocation>
</comment>
<comment type="similarity">
    <text evidence="1">Belongs to the PsbN family.</text>
</comment>
<comment type="caution">
    <text evidence="1">Originally thought to be a component of PSII; based on experiments in Synechocystis, N.tabacum and barley, and its absence from PSII in T.elongatus and T.vulcanus, this is probably not true.</text>
</comment>
<gene>
    <name evidence="1" type="primary">psbN</name>
</gene>
<sequence>METATLVAISISRLLVSFTGYALYTAFGQPSEQLRDPFEEHED</sequence>
<proteinExistence type="inferred from homology"/>
<dbReference type="EMBL" id="AP009339">
    <property type="protein sequence ID" value="BAF64975.1"/>
    <property type="molecule type" value="Genomic_DNA"/>
</dbReference>
<dbReference type="RefSeq" id="YP_001312234.1">
    <property type="nucleotide sequence ID" value="NC_009618.1"/>
</dbReference>
<dbReference type="SMR" id="A6H5K9"/>
<dbReference type="GeneID" id="5309494"/>
<dbReference type="GO" id="GO:0009535">
    <property type="term" value="C:chloroplast thylakoid membrane"/>
    <property type="evidence" value="ECO:0007669"/>
    <property type="project" value="UniProtKB-SubCell"/>
</dbReference>
<dbReference type="GO" id="GO:0015979">
    <property type="term" value="P:photosynthesis"/>
    <property type="evidence" value="ECO:0007669"/>
    <property type="project" value="InterPro"/>
</dbReference>
<dbReference type="HAMAP" id="MF_00293">
    <property type="entry name" value="PSII_PsbN"/>
    <property type="match status" value="1"/>
</dbReference>
<dbReference type="InterPro" id="IPR003398">
    <property type="entry name" value="PSII_PsbN"/>
</dbReference>
<dbReference type="PANTHER" id="PTHR35326">
    <property type="entry name" value="PROTEIN PSBN"/>
    <property type="match status" value="1"/>
</dbReference>
<dbReference type="PANTHER" id="PTHR35326:SF3">
    <property type="entry name" value="PROTEIN PSBN"/>
    <property type="match status" value="1"/>
</dbReference>
<dbReference type="Pfam" id="PF02468">
    <property type="entry name" value="PsbN"/>
    <property type="match status" value="1"/>
</dbReference>
<feature type="chain" id="PRO_0000362190" description="Protein PsbN">
    <location>
        <begin position="1"/>
        <end position="43"/>
    </location>
</feature>
<feature type="transmembrane region" description="Helical" evidence="1">
    <location>
        <begin position="5"/>
        <end position="27"/>
    </location>
</feature>
<keyword id="KW-0150">Chloroplast</keyword>
<keyword id="KW-0472">Membrane</keyword>
<keyword id="KW-0934">Plastid</keyword>
<keyword id="KW-0793">Thylakoid</keyword>
<keyword id="KW-0812">Transmembrane</keyword>
<keyword id="KW-1133">Transmembrane helix</keyword>
<evidence type="ECO:0000255" key="1">
    <source>
        <dbReference type="HAMAP-Rule" id="MF_00293"/>
    </source>
</evidence>
<accession>A6H5K9</accession>
<protein>
    <recommendedName>
        <fullName evidence="1">Protein PsbN</fullName>
    </recommendedName>
</protein>